<keyword id="KW-0325">Glycoprotein</keyword>
<keyword id="KW-0378">Hydrolase</keyword>
<keyword id="KW-1185">Reference proteome</keyword>
<keyword id="KW-0964">Secreted</keyword>
<keyword id="KW-0732">Signal</keyword>
<sequence>MLSWVLLAWAVACSALAGASRLTPSVLPLVVRNPYLSTWLADARHEPWSSWPIFWTGQHMGMSIMAHVPSTGNTYPLLGRPHDSLGPNNPNNGCFLGSKYDASTTNMTYLIQPEGKHLAGESVKITITFLSPITPTSTLRQSIPAGYVTIRVEGNMNVNIYMDMNGEWVTGDRGSSLIWKMDNIVDTGKGESLYQWQVSRKTEQLFTEFQDRAEWGMLHFLAPQGVRYESGTSMLLRTRFARTGVLQNRNDERFRTVMDEEPVFAYSKAFNLNGTDDEPNIEAIHDEVTFTIAHTQDPVVQFASARGLTLMKPLWESYFPDVKSLLNFHYFDLDKARILAHRYSNQLARDAQLSAAEDYVDVVALTARQVLGATSFSGTSDNPLLFLKEISSNGNCQTVDVIFPSFPFFLYTNPRWLAYLLEPLIEHMLSGQYPNNYSMHDLGAHFPNMTGHPDGKDEYMPVEECGNMLIMGLSIVNSLRFPPEANTTAPWYPGTLEARDAEPDVVGLFPLRDLQTVGGIDRLDSVWGVGPDATNLARKWVEKSYRLWRQWTGYLVEFSLEPHNQLSTDDFAGWLALQTNLALKGIVGINAMSEMSRFVGKTDDYKYFKNISDTYITKWEGFGFSRDGTHAKLSYDWYGSWTTLYNMFADALLCFHLDGTEYDTHPRTLDDQEPIAPPPGKTGFIPRRVYEKQSKWYANVRQKYGLPLDSRHLYTKSDWEFFSMAVSSPSVRSEILQSYAKWVNETSTDHPLTDLYKTEEDGGYPGPNFFARPVVGGHFAFLALEKACNGKATDGLKFLDDKDNNSPEDIPEDNVHDGDADNEDSQSPIQDSDGSEVKAGDQAQFPIQDMDDSQMTIVNEND</sequence>
<organism>
    <name type="scientific">Arthroderma benhamiae (strain ATCC MYA-4681 / CBS 112371)</name>
    <name type="common">Trichophyton mentagrophytes</name>
    <dbReference type="NCBI Taxonomy" id="663331"/>
    <lineage>
        <taxon>Eukaryota</taxon>
        <taxon>Fungi</taxon>
        <taxon>Dikarya</taxon>
        <taxon>Ascomycota</taxon>
        <taxon>Pezizomycotina</taxon>
        <taxon>Eurotiomycetes</taxon>
        <taxon>Eurotiomycetidae</taxon>
        <taxon>Onygenales</taxon>
        <taxon>Arthrodermataceae</taxon>
        <taxon>Trichophyton</taxon>
    </lineage>
</organism>
<name>GTAA_ARTBC</name>
<proteinExistence type="evidence at protein level"/>
<feature type="signal peptide" evidence="2">
    <location>
        <begin position="1"/>
        <end position="19"/>
    </location>
</feature>
<feature type="chain" id="PRO_0000434907" description="Probable glutaminase ARB_05535/05536">
    <location>
        <begin position="20"/>
        <end position="862"/>
    </location>
</feature>
<feature type="region of interest" description="Disordered" evidence="4">
    <location>
        <begin position="798"/>
        <end position="862"/>
    </location>
</feature>
<feature type="compositionally biased region" description="Polar residues" evidence="4">
    <location>
        <begin position="853"/>
        <end position="862"/>
    </location>
</feature>
<feature type="glycosylation site" description="N-linked (GlcNAc...) asparagine" evidence="3">
    <location>
        <position position="106"/>
    </location>
</feature>
<feature type="glycosylation site" description="N-linked (GlcNAc...) asparagine" evidence="3">
    <location>
        <position position="273"/>
    </location>
</feature>
<feature type="glycosylation site" description="N-linked (GlcNAc...) asparagine" evidence="3">
    <location>
        <position position="436"/>
    </location>
</feature>
<feature type="glycosylation site" description="N-linked (GlcNAc...) asparagine" evidence="3">
    <location>
        <position position="448"/>
    </location>
</feature>
<feature type="glycosylation site" description="N-linked (GlcNAc...) asparagine" evidence="3">
    <location>
        <position position="486"/>
    </location>
</feature>
<feature type="glycosylation site" description="N-linked (GlcNAc...) asparagine" evidence="3">
    <location>
        <position position="610"/>
    </location>
</feature>
<feature type="glycosylation site" description="N-linked (GlcNAc...) asparagine" evidence="3">
    <location>
        <position position="744"/>
    </location>
</feature>
<comment type="function">
    <text evidence="1">Glutaminase catalyzes the hydrolysis of glutamine to glutamic acid and plays a key role in nitrogen metabolism (By similarity).</text>
</comment>
<comment type="catalytic activity">
    <reaction evidence="1">
        <text>L-glutamine + H2O = L-glutamate + NH4(+)</text>
        <dbReference type="Rhea" id="RHEA:15889"/>
        <dbReference type="ChEBI" id="CHEBI:15377"/>
        <dbReference type="ChEBI" id="CHEBI:28938"/>
        <dbReference type="ChEBI" id="CHEBI:29985"/>
        <dbReference type="ChEBI" id="CHEBI:58359"/>
        <dbReference type="EC" id="3.5.1.2"/>
    </reaction>
</comment>
<comment type="subcellular location">
    <subcellularLocation>
        <location evidence="5">Secreted</location>
    </subcellularLocation>
</comment>
<comment type="similarity">
    <text evidence="6">Belongs to the fungal glutaminase gtaA family.</text>
</comment>
<comment type="sequence caution" evidence="6">
    <conflict type="erroneous gene model prediction">
        <sequence resource="EMBL-CDS" id="EFE35493"/>
    </conflict>
    <text>The predicted genes ARB_05535 and ARB_05536 have been merged into 1 gene: ARB_05535/05536.</text>
</comment>
<comment type="sequence caution" evidence="6">
    <conflict type="erroneous gene model prediction">
        <sequence resource="EMBL-CDS" id="EFE35494"/>
    </conflict>
    <text>The predicted genes ARB_05535 and ARB_05536 have been merged into 1 gene: ARB_05535/05536.</text>
</comment>
<gene>
    <name type="ORF">ARB_05535/05536</name>
</gene>
<accession>D4AMT2</accession>
<accession>D4AMT3</accession>
<evidence type="ECO:0000250" key="1">
    <source>
        <dbReference type="UniProtKB" id="Q2U4L7"/>
    </source>
</evidence>
<evidence type="ECO:0000255" key="2"/>
<evidence type="ECO:0000255" key="3">
    <source>
        <dbReference type="PROSITE-ProRule" id="PRU00498"/>
    </source>
</evidence>
<evidence type="ECO:0000256" key="4">
    <source>
        <dbReference type="SAM" id="MobiDB-lite"/>
    </source>
</evidence>
<evidence type="ECO:0000269" key="5">
    <source>
    </source>
</evidence>
<evidence type="ECO:0000305" key="6"/>
<protein>
    <recommendedName>
        <fullName evidence="6">Probable glutaminase ARB_05535/05536</fullName>
        <ecNumber evidence="1">3.5.1.2</ecNumber>
    </recommendedName>
</protein>
<dbReference type="EC" id="3.5.1.2" evidence="1"/>
<dbReference type="EMBL" id="ABSU01000003">
    <property type="protein sequence ID" value="EFE35493.1"/>
    <property type="status" value="ALT_SEQ"/>
    <property type="molecule type" value="Genomic_DNA"/>
</dbReference>
<dbReference type="EMBL" id="ABSU01000003">
    <property type="protein sequence ID" value="EFE35494.1"/>
    <property type="status" value="ALT_SEQ"/>
    <property type="molecule type" value="Genomic_DNA"/>
</dbReference>
<dbReference type="RefSeq" id="XP_003016138.1">
    <property type="nucleotide sequence ID" value="XM_003016092.1"/>
</dbReference>
<dbReference type="RefSeq" id="XP_003016139.1">
    <property type="nucleotide sequence ID" value="XM_003016093.1"/>
</dbReference>
<dbReference type="STRING" id="663331.D4AMT2"/>
<dbReference type="KEGG" id="abe:ARB_05535"/>
<dbReference type="KEGG" id="abe:ARB_05536"/>
<dbReference type="eggNOG" id="ENOG502QPQS">
    <property type="taxonomic scope" value="Eukaryota"/>
</dbReference>
<dbReference type="HOGENOM" id="CLU_008020_1_1_1"/>
<dbReference type="OrthoDB" id="431715at2759"/>
<dbReference type="Proteomes" id="UP000008866">
    <property type="component" value="Unassembled WGS sequence"/>
</dbReference>
<dbReference type="GO" id="GO:0005576">
    <property type="term" value="C:extracellular region"/>
    <property type="evidence" value="ECO:0007669"/>
    <property type="project" value="UniProtKB-SubCell"/>
</dbReference>
<dbReference type="GO" id="GO:0004359">
    <property type="term" value="F:glutaminase activity"/>
    <property type="evidence" value="ECO:0007669"/>
    <property type="project" value="UniProtKB-EC"/>
</dbReference>
<dbReference type="InterPro" id="IPR052743">
    <property type="entry name" value="Glutaminase_GtaA"/>
</dbReference>
<dbReference type="InterPro" id="IPR032514">
    <property type="entry name" value="GtaA_central"/>
</dbReference>
<dbReference type="InterPro" id="IPR033433">
    <property type="entry name" value="GtaA_N"/>
</dbReference>
<dbReference type="PANTHER" id="PTHR31987">
    <property type="entry name" value="GLUTAMINASE A-RELATED"/>
    <property type="match status" value="1"/>
</dbReference>
<dbReference type="PANTHER" id="PTHR31987:SF12">
    <property type="entry name" value="PUTATIVE (AFU_ORTHOLOGUE AFUA_3G10910)-RELATED"/>
    <property type="match status" value="1"/>
</dbReference>
<dbReference type="Pfam" id="PF17168">
    <property type="entry name" value="DUF5127"/>
    <property type="match status" value="1"/>
</dbReference>
<dbReference type="Pfam" id="PF16335">
    <property type="entry name" value="GtaA_6_Hairpin"/>
    <property type="match status" value="3"/>
</dbReference>
<reference key="1">
    <citation type="journal article" date="2011" name="Genome Biol.">
        <title>Comparative and functional genomics provide insights into the pathogenicity of dermatophytic fungi.</title>
        <authorList>
            <person name="Burmester A."/>
            <person name="Shelest E."/>
            <person name="Gloeckner G."/>
            <person name="Heddergott C."/>
            <person name="Schindler S."/>
            <person name="Staib P."/>
            <person name="Heidel A."/>
            <person name="Felder M."/>
            <person name="Petzold A."/>
            <person name="Szafranski K."/>
            <person name="Feuermann M."/>
            <person name="Pedruzzi I."/>
            <person name="Priebe S."/>
            <person name="Groth M."/>
            <person name="Winkler R."/>
            <person name="Li W."/>
            <person name="Kniemeyer O."/>
            <person name="Schroeckh V."/>
            <person name="Hertweck C."/>
            <person name="Hube B."/>
            <person name="White T.C."/>
            <person name="Platzer M."/>
            <person name="Guthke R."/>
            <person name="Heitman J."/>
            <person name="Woestemeyer J."/>
            <person name="Zipfel P.F."/>
            <person name="Monod M."/>
            <person name="Brakhage A.A."/>
        </authorList>
    </citation>
    <scope>NUCLEOTIDE SEQUENCE [LARGE SCALE GENOMIC DNA]</scope>
    <source>
        <strain>ATCC MYA-4681 / CBS 112371</strain>
    </source>
</reference>
<reference key="2">
    <citation type="journal article" date="2011" name="Proteomics">
        <title>Identification of novel secreted proteases during extracellular proteolysis by dermatophytes at acidic pH.</title>
        <authorList>
            <person name="Sriranganadane D."/>
            <person name="Waridel P."/>
            <person name="Salamin K."/>
            <person name="Feuermann M."/>
            <person name="Mignon B."/>
            <person name="Staib P."/>
            <person name="Neuhaus J.M."/>
            <person name="Quadroni M."/>
            <person name="Monod M."/>
        </authorList>
    </citation>
    <scope>IDENTIFICATION BY MASS SPECTROMETRY</scope>
    <scope>SUBCELLULAR LOCATION</scope>
</reference>